<name>IOLG_KLEP7</name>
<accession>A6THJ2</accession>
<feature type="chain" id="PRO_0000352571" description="Inositol 2-dehydrogenase">
    <location>
        <begin position="1"/>
        <end position="337"/>
    </location>
</feature>
<protein>
    <recommendedName>
        <fullName evidence="1">Inositol 2-dehydrogenase</fullName>
        <ecNumber evidence="1">1.1.1.18</ecNumber>
    </recommendedName>
    <alternativeName>
        <fullName evidence="1">Myo-inositol 2-dehydrogenase</fullName>
        <shortName evidence="1">MI 2-dehydrogenase</shortName>
    </alternativeName>
</protein>
<dbReference type="EC" id="1.1.1.18" evidence="1"/>
<dbReference type="EMBL" id="CP000647">
    <property type="protein sequence ID" value="ABR80026.1"/>
    <property type="status" value="ALT_INIT"/>
    <property type="molecule type" value="Genomic_DNA"/>
</dbReference>
<dbReference type="RefSeq" id="WP_004186740.1">
    <property type="nucleotide sequence ID" value="NC_009648.1"/>
</dbReference>
<dbReference type="SMR" id="A6THJ2"/>
<dbReference type="STRING" id="272620.KPN_04675"/>
<dbReference type="jPOST" id="A6THJ2"/>
<dbReference type="PaxDb" id="272620-KPN_04675"/>
<dbReference type="EnsemblBacteria" id="ABR80026">
    <property type="protein sequence ID" value="ABR80026"/>
    <property type="gene ID" value="KPN_04675"/>
</dbReference>
<dbReference type="KEGG" id="kpn:KPN_04675"/>
<dbReference type="HOGENOM" id="CLU_023194_0_1_6"/>
<dbReference type="Proteomes" id="UP000000265">
    <property type="component" value="Chromosome"/>
</dbReference>
<dbReference type="GO" id="GO:0050112">
    <property type="term" value="F:inositol 2-dehydrogenase (NAD+) activity"/>
    <property type="evidence" value="ECO:0007669"/>
    <property type="project" value="UniProtKB-UniRule"/>
</dbReference>
<dbReference type="GO" id="GO:0000166">
    <property type="term" value="F:nucleotide binding"/>
    <property type="evidence" value="ECO:0007669"/>
    <property type="project" value="InterPro"/>
</dbReference>
<dbReference type="GO" id="GO:0019310">
    <property type="term" value="P:inositol catabolic process"/>
    <property type="evidence" value="ECO:0007669"/>
    <property type="project" value="UniProtKB-UniRule"/>
</dbReference>
<dbReference type="Gene3D" id="3.30.360.10">
    <property type="entry name" value="Dihydrodipicolinate Reductase, domain 2"/>
    <property type="match status" value="1"/>
</dbReference>
<dbReference type="Gene3D" id="3.40.50.720">
    <property type="entry name" value="NAD(P)-binding Rossmann-like Domain"/>
    <property type="match status" value="1"/>
</dbReference>
<dbReference type="HAMAP" id="MF_01671">
    <property type="entry name" value="IolG"/>
    <property type="match status" value="1"/>
</dbReference>
<dbReference type="InterPro" id="IPR050424">
    <property type="entry name" value="Gfo-Idh-MocA_inositol_DH"/>
</dbReference>
<dbReference type="InterPro" id="IPR004104">
    <property type="entry name" value="Gfo/Idh/MocA-like_OxRdtase_C"/>
</dbReference>
<dbReference type="InterPro" id="IPR000683">
    <property type="entry name" value="Gfo/Idh/MocA-like_OxRdtase_N"/>
</dbReference>
<dbReference type="InterPro" id="IPR023794">
    <property type="entry name" value="MI/DCI_dehydrogenase"/>
</dbReference>
<dbReference type="InterPro" id="IPR036291">
    <property type="entry name" value="NAD(P)-bd_dom_sf"/>
</dbReference>
<dbReference type="PANTHER" id="PTHR43593">
    <property type="match status" value="1"/>
</dbReference>
<dbReference type="PANTHER" id="PTHR43593:SF1">
    <property type="entry name" value="INOSITOL 2-DEHYDROGENASE"/>
    <property type="match status" value="1"/>
</dbReference>
<dbReference type="Pfam" id="PF01408">
    <property type="entry name" value="GFO_IDH_MocA"/>
    <property type="match status" value="1"/>
</dbReference>
<dbReference type="Pfam" id="PF02894">
    <property type="entry name" value="GFO_IDH_MocA_C"/>
    <property type="match status" value="1"/>
</dbReference>
<dbReference type="SUPFAM" id="SSF55347">
    <property type="entry name" value="Glyceraldehyde-3-phosphate dehydrogenase-like, C-terminal domain"/>
    <property type="match status" value="1"/>
</dbReference>
<dbReference type="SUPFAM" id="SSF51735">
    <property type="entry name" value="NAD(P)-binding Rossmann-fold domains"/>
    <property type="match status" value="1"/>
</dbReference>
<evidence type="ECO:0000255" key="1">
    <source>
        <dbReference type="HAMAP-Rule" id="MF_01671"/>
    </source>
</evidence>
<evidence type="ECO:0000305" key="2"/>
<sequence>MSLKLGVIGAGAIGKEHIRRCTQVLQGATVVAVSDINADNARAAVALPGVQAEVYADGHDVINASDVDAILVTSWDPTHEEYTLAAIAAGKPVFCEKPLAMTAEGCRRIVDAEMKAGRRLVQVGFMRPYDEGYLALKKVIDDGDIGAPLMLRCAHRNQSVGENYTTDMAITNTLIHELDVLRWLLNDDYRSVQVRFPRSTSHTHARLKDPQIVSFETKKGTLIDVEVFVNCQYGYDIQCEVVGETGIARLPEPSAVQMRKSASLSTAILTDWKDRFIKAYDVELQAFINDVKAGQLHGPSAWDGYAASVAADACIKAQGTSEPVEVTLPECPAFYKR</sequence>
<comment type="function">
    <text evidence="1">Involved in the oxidation of myo-inositol (MI) to 2-keto-myo-inositol (2KMI or 2-inosose).</text>
</comment>
<comment type="catalytic activity">
    <reaction evidence="1">
        <text>myo-inositol + NAD(+) = scyllo-inosose + NADH + H(+)</text>
        <dbReference type="Rhea" id="RHEA:16949"/>
        <dbReference type="ChEBI" id="CHEBI:15378"/>
        <dbReference type="ChEBI" id="CHEBI:17268"/>
        <dbReference type="ChEBI" id="CHEBI:17811"/>
        <dbReference type="ChEBI" id="CHEBI:57540"/>
        <dbReference type="ChEBI" id="CHEBI:57945"/>
        <dbReference type="EC" id="1.1.1.18"/>
    </reaction>
</comment>
<comment type="subunit">
    <text evidence="1">Homotetramer.</text>
</comment>
<comment type="similarity">
    <text evidence="1">Belongs to the Gfo/Idh/MocA family.</text>
</comment>
<comment type="sequence caution" evidence="2">
    <conflict type="erroneous initiation">
        <sequence resource="EMBL-CDS" id="ABR80026"/>
    </conflict>
</comment>
<organism>
    <name type="scientific">Klebsiella pneumoniae subsp. pneumoniae (strain ATCC 700721 / MGH 78578)</name>
    <dbReference type="NCBI Taxonomy" id="272620"/>
    <lineage>
        <taxon>Bacteria</taxon>
        <taxon>Pseudomonadati</taxon>
        <taxon>Pseudomonadota</taxon>
        <taxon>Gammaproteobacteria</taxon>
        <taxon>Enterobacterales</taxon>
        <taxon>Enterobacteriaceae</taxon>
        <taxon>Klebsiella/Raoultella group</taxon>
        <taxon>Klebsiella</taxon>
        <taxon>Klebsiella pneumoniae complex</taxon>
    </lineage>
</organism>
<reference key="1">
    <citation type="submission" date="2006-09" db="EMBL/GenBank/DDBJ databases">
        <authorList>
            <consortium name="The Klebsiella pneumonia Genome Sequencing Project"/>
            <person name="McClelland M."/>
            <person name="Sanderson E.K."/>
            <person name="Spieth J."/>
            <person name="Clifton W.S."/>
            <person name="Latreille P."/>
            <person name="Sabo A."/>
            <person name="Pepin K."/>
            <person name="Bhonagiri V."/>
            <person name="Porwollik S."/>
            <person name="Ali J."/>
            <person name="Wilson R.K."/>
        </authorList>
    </citation>
    <scope>NUCLEOTIDE SEQUENCE [LARGE SCALE GENOMIC DNA]</scope>
    <source>
        <strain>ATCC 700721 / MGH 78578</strain>
    </source>
</reference>
<keyword id="KW-0520">NAD</keyword>
<keyword id="KW-0560">Oxidoreductase</keyword>
<proteinExistence type="inferred from homology"/>
<gene>
    <name evidence="1" type="primary">iolG</name>
    <name type="ordered locus">KPN78578_46020</name>
    <name type="ORF">KPN_04675</name>
</gene>